<feature type="transit peptide" description="Chloroplast" evidence="2">
    <location>
        <begin position="1"/>
        <end position="49"/>
    </location>
</feature>
<feature type="chain" id="PRO_0000030697" description="Cytochrome b6-f complex iron-sulfur subunit, chloroplastic">
    <location>
        <begin position="50"/>
        <end position="222"/>
    </location>
</feature>
<feature type="transmembrane region" description="Helical" evidence="2">
    <location>
        <begin position="66"/>
        <end position="86"/>
    </location>
</feature>
<feature type="domain" description="Rieske">
    <location>
        <begin position="109"/>
        <end position="205"/>
    </location>
</feature>
<feature type="binding site" evidence="1">
    <location>
        <position position="151"/>
    </location>
    <ligand>
        <name>[2Fe-2S] cluster</name>
        <dbReference type="ChEBI" id="CHEBI:190135"/>
    </ligand>
</feature>
<feature type="binding site" evidence="1">
    <location>
        <position position="153"/>
    </location>
    <ligand>
        <name>[2Fe-2S] cluster</name>
        <dbReference type="ChEBI" id="CHEBI:190135"/>
    </ligand>
</feature>
<feature type="binding site" evidence="1">
    <location>
        <position position="169"/>
    </location>
    <ligand>
        <name>[2Fe-2S] cluster</name>
        <dbReference type="ChEBI" id="CHEBI:190135"/>
    </ligand>
</feature>
<feature type="binding site" evidence="1">
    <location>
        <position position="172"/>
    </location>
    <ligand>
        <name>[2Fe-2S] cluster</name>
        <dbReference type="ChEBI" id="CHEBI:190135"/>
    </ligand>
</feature>
<feature type="disulfide bond" evidence="1">
    <location>
        <begin position="156"/>
        <end position="171"/>
    </location>
</feature>
<reference key="1">
    <citation type="submission" date="2002-06" db="EMBL/GenBank/DDBJ databases">
        <title>Triticum aestivum putative Rieske Fe-S precursor protein (RISP).</title>
        <authorList>
            <person name="Lu Z.-X."/>
            <person name="Laroche A."/>
            <person name="Gaudet D."/>
        </authorList>
    </citation>
    <scope>NUCLEOTIDE SEQUENCE [MRNA]</scope>
</reference>
<accession>Q7X9A6</accession>
<dbReference type="EC" id="7.1.1.6"/>
<dbReference type="EMBL" id="AY123422">
    <property type="protein sequence ID" value="AAM88439.1"/>
    <property type="molecule type" value="mRNA"/>
</dbReference>
<dbReference type="RefSeq" id="NP_001392437.1">
    <property type="nucleotide sequence ID" value="NM_001405508.1"/>
</dbReference>
<dbReference type="SMR" id="Q7X9A6"/>
<dbReference type="STRING" id="4565.Q7X9A6"/>
<dbReference type="PaxDb" id="4565-Traes_2AS_1475F8BDB.1"/>
<dbReference type="EnsemblPlants" id="TraesARI2D03G01168670.1">
    <property type="protein sequence ID" value="TraesARI2D03G01168670.1"/>
    <property type="gene ID" value="TraesARI2D03G01168670"/>
</dbReference>
<dbReference type="EnsemblPlants" id="TraesCAD_scaffold_092989_01G000200.1">
    <property type="protein sequence ID" value="TraesCAD_scaffold_092989_01G000200.1"/>
    <property type="gene ID" value="TraesCAD_scaffold_092989_01G000200"/>
</dbReference>
<dbReference type="EnsemblPlants" id="TraesCLE_scaffold_085676_01G000200.1">
    <property type="protein sequence ID" value="TraesCLE_scaffold_085676_01G000200.1"/>
    <property type="gene ID" value="TraesCLE_scaffold_085676_01G000200"/>
</dbReference>
<dbReference type="EnsemblPlants" id="TraesCS2D02G214700.1">
    <property type="protein sequence ID" value="TraesCS2D02G214700.1"/>
    <property type="gene ID" value="TraesCS2D02G214700"/>
</dbReference>
<dbReference type="EnsemblPlants" id="TraesCS2D03G0451200.1">
    <property type="protein sequence ID" value="TraesCS2D03G0451200.1.CDS"/>
    <property type="gene ID" value="TraesCS2D03G0451200"/>
</dbReference>
<dbReference type="EnsemblPlants" id="TraesJAG2D03G01159270.1">
    <property type="protein sequence ID" value="TraesJAG2D03G01159270.1"/>
    <property type="gene ID" value="TraesJAG2D03G01159270"/>
</dbReference>
<dbReference type="EnsemblPlants" id="TraesJUL2D03G01159000.1">
    <property type="protein sequence ID" value="TraesJUL2D03G01159000.1"/>
    <property type="gene ID" value="TraesJUL2D03G01159000"/>
</dbReference>
<dbReference type="EnsemblPlants" id="TraesKAR2D01G0132480.1">
    <property type="protein sequence ID" value="cds.TraesKAR2D01G0132480.1"/>
    <property type="gene ID" value="TraesKAR2D01G0132480"/>
</dbReference>
<dbReference type="EnsemblPlants" id="TraesLAC2B03G00896920.1">
    <property type="protein sequence ID" value="TraesLAC2B03G00896920.1"/>
    <property type="gene ID" value="TraesLAC2B03G00896920"/>
</dbReference>
<dbReference type="EnsemblPlants" id="TraesLAC2D03G01104360.1">
    <property type="protein sequence ID" value="TraesLAC2D03G01104360.1"/>
    <property type="gene ID" value="TraesLAC2D03G01104360"/>
</dbReference>
<dbReference type="EnsemblPlants" id="TraesLDM2D03G01153380.1">
    <property type="protein sequence ID" value="TraesLDM2D03G01153380.1"/>
    <property type="gene ID" value="TraesLDM2D03G01153380"/>
</dbReference>
<dbReference type="EnsemblPlants" id="TraesMAC2D03G01151020.1">
    <property type="protein sequence ID" value="TraesMAC2D03G01151020.1"/>
    <property type="gene ID" value="TraesMAC2D03G01151020"/>
</dbReference>
<dbReference type="EnsemblPlants" id="TraesNOR2D03G01168840.1">
    <property type="protein sequence ID" value="TraesNOR2D03G01168840.1"/>
    <property type="gene ID" value="TraesNOR2D03G01168840"/>
</dbReference>
<dbReference type="EnsemblPlants" id="TraesPARA_EIv1.0_0673320.1">
    <property type="protein sequence ID" value="TraesPARA_EIv1.0_0673320.1.CDS"/>
    <property type="gene ID" value="TraesPARA_EIv1.0_0673320"/>
</dbReference>
<dbReference type="EnsemblPlants" id="TraesRN2D0100482800.1">
    <property type="protein sequence ID" value="TraesRN2D0100482800.1"/>
    <property type="gene ID" value="TraesRN2D0100482800"/>
</dbReference>
<dbReference type="EnsemblPlants" id="TraesROB_scaffold_090335_01G000200.1">
    <property type="protein sequence ID" value="TraesROB_scaffold_090335_01G000200.1"/>
    <property type="gene ID" value="TraesROB_scaffold_090335_01G000200"/>
</dbReference>
<dbReference type="EnsemblPlants" id="TraesSTA2D03G01141500.1">
    <property type="protein sequence ID" value="TraesSTA2D03G01141500.1"/>
    <property type="gene ID" value="TraesSTA2D03G01141500"/>
</dbReference>
<dbReference type="EnsemblPlants" id="TraesSYM2D03G01167240.1">
    <property type="protein sequence ID" value="TraesSYM2D03G01167240.1"/>
    <property type="gene ID" value="TraesSYM2D03G01167240"/>
</dbReference>
<dbReference type="EnsemblPlants" id="TraesWEE_scaffold_091601_01G000200.1">
    <property type="protein sequence ID" value="TraesWEE_scaffold_091601_01G000200.1"/>
    <property type="gene ID" value="TraesWEE_scaffold_091601_01G000200"/>
</dbReference>
<dbReference type="GeneID" id="543078"/>
<dbReference type="Gramene" id="TraesARI2D03G01168670.1">
    <property type="protein sequence ID" value="TraesARI2D03G01168670.1"/>
    <property type="gene ID" value="TraesARI2D03G01168670"/>
</dbReference>
<dbReference type="Gramene" id="TraesCAD_scaffold_092989_01G000200.1">
    <property type="protein sequence ID" value="TraesCAD_scaffold_092989_01G000200.1"/>
    <property type="gene ID" value="TraesCAD_scaffold_092989_01G000200"/>
</dbReference>
<dbReference type="Gramene" id="TraesCLE_scaffold_085676_01G000200.1">
    <property type="protein sequence ID" value="TraesCLE_scaffold_085676_01G000200.1"/>
    <property type="gene ID" value="TraesCLE_scaffold_085676_01G000200"/>
</dbReference>
<dbReference type="Gramene" id="TraesCS2D02G214700.1">
    <property type="protein sequence ID" value="TraesCS2D02G214700.1"/>
    <property type="gene ID" value="TraesCS2D02G214700"/>
</dbReference>
<dbReference type="Gramene" id="TraesCS2D03G0451200.1">
    <property type="protein sequence ID" value="TraesCS2D03G0451200.1.CDS"/>
    <property type="gene ID" value="TraesCS2D03G0451200"/>
</dbReference>
<dbReference type="Gramene" id="TraesJAG2D03G01159270.1">
    <property type="protein sequence ID" value="TraesJAG2D03G01159270.1"/>
    <property type="gene ID" value="TraesJAG2D03G01159270"/>
</dbReference>
<dbReference type="Gramene" id="TraesJUL2D03G01159000.1">
    <property type="protein sequence ID" value="TraesJUL2D03G01159000.1"/>
    <property type="gene ID" value="TraesJUL2D03G01159000"/>
</dbReference>
<dbReference type="Gramene" id="TraesKAR2D01G0132480.1">
    <property type="protein sequence ID" value="cds.TraesKAR2D01G0132480.1"/>
    <property type="gene ID" value="TraesKAR2D01G0132480"/>
</dbReference>
<dbReference type="Gramene" id="TraesLAC2B03G00896920.1">
    <property type="protein sequence ID" value="TraesLAC2B03G00896920.1"/>
    <property type="gene ID" value="TraesLAC2B03G00896920"/>
</dbReference>
<dbReference type="Gramene" id="TraesLAC2D03G01104360.1">
    <property type="protein sequence ID" value="TraesLAC2D03G01104360.1"/>
    <property type="gene ID" value="TraesLAC2D03G01104360"/>
</dbReference>
<dbReference type="Gramene" id="TraesLDM2D03G01153380.1">
    <property type="protein sequence ID" value="TraesLDM2D03G01153380.1"/>
    <property type="gene ID" value="TraesLDM2D03G01153380"/>
</dbReference>
<dbReference type="Gramene" id="TraesMAC2D03G01151020.1">
    <property type="protein sequence ID" value="TraesMAC2D03G01151020.1"/>
    <property type="gene ID" value="TraesMAC2D03G01151020"/>
</dbReference>
<dbReference type="Gramene" id="TraesNOR2D03G01168840.1">
    <property type="protein sequence ID" value="TraesNOR2D03G01168840.1"/>
    <property type="gene ID" value="TraesNOR2D03G01168840"/>
</dbReference>
<dbReference type="Gramene" id="TraesPARA_EIv1.0_0673320.1">
    <property type="protein sequence ID" value="TraesPARA_EIv1.0_0673320.1.CDS"/>
    <property type="gene ID" value="TraesPARA_EIv1.0_0673320"/>
</dbReference>
<dbReference type="Gramene" id="TraesRN2D0100482800.1">
    <property type="protein sequence ID" value="TraesRN2D0100482800.1"/>
    <property type="gene ID" value="TraesRN2D0100482800"/>
</dbReference>
<dbReference type="Gramene" id="TraesROB_scaffold_090335_01G000200.1">
    <property type="protein sequence ID" value="TraesROB_scaffold_090335_01G000200.1"/>
    <property type="gene ID" value="TraesROB_scaffold_090335_01G000200"/>
</dbReference>
<dbReference type="Gramene" id="TraesSTA2D03G01141500.1">
    <property type="protein sequence ID" value="TraesSTA2D03G01141500.1"/>
    <property type="gene ID" value="TraesSTA2D03G01141500"/>
</dbReference>
<dbReference type="Gramene" id="TraesSYM2D03G01167240.1">
    <property type="protein sequence ID" value="TraesSYM2D03G01167240.1"/>
    <property type="gene ID" value="TraesSYM2D03G01167240"/>
</dbReference>
<dbReference type="Gramene" id="TraesWEE_scaffold_091601_01G000200.1">
    <property type="protein sequence ID" value="TraesWEE_scaffold_091601_01G000200.1"/>
    <property type="gene ID" value="TraesWEE_scaffold_091601_01G000200"/>
</dbReference>
<dbReference type="eggNOG" id="KOG1671">
    <property type="taxonomic scope" value="Eukaryota"/>
</dbReference>
<dbReference type="OMA" id="HASKNCI"/>
<dbReference type="OrthoDB" id="1637982at2759"/>
<dbReference type="Proteomes" id="UP000019116">
    <property type="component" value="Chromosome 2D"/>
</dbReference>
<dbReference type="ExpressionAtlas" id="Q7X9A6">
    <property type="expression patterns" value="baseline and differential"/>
</dbReference>
<dbReference type="GO" id="GO:0009507">
    <property type="term" value="C:chloroplast"/>
    <property type="evidence" value="ECO:0000314"/>
    <property type="project" value="PHI-base"/>
</dbReference>
<dbReference type="GO" id="GO:0009535">
    <property type="term" value="C:chloroplast thylakoid membrane"/>
    <property type="evidence" value="ECO:0007669"/>
    <property type="project" value="UniProtKB-SubCell"/>
</dbReference>
<dbReference type="GO" id="GO:0005886">
    <property type="term" value="C:plasma membrane"/>
    <property type="evidence" value="ECO:0000318"/>
    <property type="project" value="GO_Central"/>
</dbReference>
<dbReference type="GO" id="GO:0051537">
    <property type="term" value="F:2 iron, 2 sulfur cluster binding"/>
    <property type="evidence" value="ECO:0007669"/>
    <property type="project" value="UniProtKB-KW"/>
</dbReference>
<dbReference type="GO" id="GO:0045158">
    <property type="term" value="F:electron transporter, transferring electrons within cytochrome b6/f complex of photosystem II activity"/>
    <property type="evidence" value="ECO:0007669"/>
    <property type="project" value="InterPro"/>
</dbReference>
<dbReference type="GO" id="GO:0046872">
    <property type="term" value="F:metal ion binding"/>
    <property type="evidence" value="ECO:0007669"/>
    <property type="project" value="UniProtKB-KW"/>
</dbReference>
<dbReference type="GO" id="GO:0016491">
    <property type="term" value="F:oxidoreductase activity"/>
    <property type="evidence" value="ECO:0000318"/>
    <property type="project" value="GO_Central"/>
</dbReference>
<dbReference type="GO" id="GO:0009496">
    <property type="term" value="F:plastoquinol--plastocyanin reductase activity"/>
    <property type="evidence" value="ECO:0000314"/>
    <property type="project" value="PHI-base"/>
</dbReference>
<dbReference type="GO" id="GO:0009767">
    <property type="term" value="P:photosynthetic electron transport chain"/>
    <property type="evidence" value="ECO:0000314"/>
    <property type="project" value="PHI-base"/>
</dbReference>
<dbReference type="CDD" id="cd03471">
    <property type="entry name" value="Rieske_cytochrome_b6f"/>
    <property type="match status" value="1"/>
</dbReference>
<dbReference type="FunFam" id="1.20.5.700:FF:000002">
    <property type="entry name" value="Cytochrome b6-f complex iron-sulfur subunit"/>
    <property type="match status" value="1"/>
</dbReference>
<dbReference type="FunFam" id="2.102.10.10:FF:000007">
    <property type="entry name" value="Cytochrome b6-f complex iron-sulfur subunit"/>
    <property type="match status" value="1"/>
</dbReference>
<dbReference type="Gene3D" id="2.102.10.10">
    <property type="entry name" value="Rieske [2Fe-2S] iron-sulphur domain"/>
    <property type="match status" value="1"/>
</dbReference>
<dbReference type="Gene3D" id="1.20.5.700">
    <property type="entry name" value="Single helix bin"/>
    <property type="match status" value="1"/>
</dbReference>
<dbReference type="HAMAP" id="MF_01335">
    <property type="entry name" value="Cytb6_f_Rieske"/>
    <property type="match status" value="1"/>
</dbReference>
<dbReference type="InterPro" id="IPR023960">
    <property type="entry name" value="Cyt_b6_f_Rieske"/>
</dbReference>
<dbReference type="InterPro" id="IPR017941">
    <property type="entry name" value="Rieske_2Fe-2S"/>
</dbReference>
<dbReference type="InterPro" id="IPR036922">
    <property type="entry name" value="Rieske_2Fe-2S_sf"/>
</dbReference>
<dbReference type="InterPro" id="IPR014349">
    <property type="entry name" value="Rieske_Fe-S_prot"/>
</dbReference>
<dbReference type="InterPro" id="IPR005805">
    <property type="entry name" value="Rieske_Fe-S_prot_C"/>
</dbReference>
<dbReference type="NCBIfam" id="NF045928">
    <property type="entry name" value="Cytb6fFeSPetC"/>
    <property type="match status" value="1"/>
</dbReference>
<dbReference type="NCBIfam" id="NF010001">
    <property type="entry name" value="PRK13474.1"/>
    <property type="match status" value="1"/>
</dbReference>
<dbReference type="PANTHER" id="PTHR10134">
    <property type="entry name" value="CYTOCHROME B-C1 COMPLEX SUBUNIT RIESKE, MITOCHONDRIAL"/>
    <property type="match status" value="1"/>
</dbReference>
<dbReference type="Pfam" id="PF00355">
    <property type="entry name" value="Rieske"/>
    <property type="match status" value="1"/>
</dbReference>
<dbReference type="Pfam" id="PF25471">
    <property type="entry name" value="TM_PetC"/>
    <property type="match status" value="1"/>
</dbReference>
<dbReference type="PRINTS" id="PR00162">
    <property type="entry name" value="RIESKE"/>
</dbReference>
<dbReference type="SUPFAM" id="SSF50022">
    <property type="entry name" value="ISP domain"/>
    <property type="match status" value="1"/>
</dbReference>
<dbReference type="PROSITE" id="PS51296">
    <property type="entry name" value="RIESKE"/>
    <property type="match status" value="1"/>
</dbReference>
<name>UCRIA_WHEAT</name>
<organism>
    <name type="scientific">Triticum aestivum</name>
    <name type="common">Wheat</name>
    <dbReference type="NCBI Taxonomy" id="4565"/>
    <lineage>
        <taxon>Eukaryota</taxon>
        <taxon>Viridiplantae</taxon>
        <taxon>Streptophyta</taxon>
        <taxon>Embryophyta</taxon>
        <taxon>Tracheophyta</taxon>
        <taxon>Spermatophyta</taxon>
        <taxon>Magnoliopsida</taxon>
        <taxon>Liliopsida</taxon>
        <taxon>Poales</taxon>
        <taxon>Poaceae</taxon>
        <taxon>BOP clade</taxon>
        <taxon>Pooideae</taxon>
        <taxon>Triticodae</taxon>
        <taxon>Triticeae</taxon>
        <taxon>Triticinae</taxon>
        <taxon>Triticum</taxon>
    </lineage>
</organism>
<proteinExistence type="evidence at transcript level"/>
<sequence>MASTALSTASNPTQLCRTRASSLCKPVKGLGFGRERIPRNITCMAGSISADRVPDMSKRELMNLLLLGAISLPTFGMLVPYGSFLVPAGSGSNAGGVAAKDKLGNDILVEDWLKTHGPNDRTLAQGLKGDPTYLVVESDKTLATYGINAVCTHLGCVVPWNAAENKFLCPCHGSQYNNQGKVVRGPAPLSLALVHADVDDGKVVFVPWVETDFRTGDNPWWK</sequence>
<comment type="function">
    <text evidence="1">Component of the cytochrome b6-f complex, which mediates electron transfer between photosystem II (PSII) and photosystem I (PSI), cyclic electron flow around PSI, and state transitions.</text>
</comment>
<comment type="catalytic activity">
    <reaction>
        <text>2 oxidized [plastocyanin] + a plastoquinol + 2 H(+)(in) = 2 reduced [plastocyanin] + a plastoquinone + 4 H(+)(out)</text>
        <dbReference type="Rhea" id="RHEA:22148"/>
        <dbReference type="Rhea" id="RHEA-COMP:9561"/>
        <dbReference type="Rhea" id="RHEA-COMP:9562"/>
        <dbReference type="Rhea" id="RHEA-COMP:10039"/>
        <dbReference type="Rhea" id="RHEA-COMP:10040"/>
        <dbReference type="ChEBI" id="CHEBI:15378"/>
        <dbReference type="ChEBI" id="CHEBI:17757"/>
        <dbReference type="ChEBI" id="CHEBI:29036"/>
        <dbReference type="ChEBI" id="CHEBI:49552"/>
        <dbReference type="ChEBI" id="CHEBI:62192"/>
        <dbReference type="EC" id="7.1.1.6"/>
    </reaction>
</comment>
<comment type="cofactor">
    <cofactor evidence="1">
        <name>[2Fe-2S] cluster</name>
        <dbReference type="ChEBI" id="CHEBI:190135"/>
    </cofactor>
    <text evidence="1">Binds 1 [2Fe-2S] cluster per subunit.</text>
</comment>
<comment type="subunit">
    <text evidence="1">The 4 large subunits of the cytochrome b6-f complex are cytochrome b6, subunit IV (17 kDa polypeptide, petD), cytochrome f and the Rieske protein, while the 4 small subunits are petG, petL, petM and petN. The complex functions as a dimer (By similarity).</text>
</comment>
<comment type="subcellular location">
    <subcellularLocation>
        <location evidence="1">Plastid</location>
        <location evidence="1">Chloroplast thylakoid membrane</location>
        <topology evidence="1">Single-pass membrane protein</topology>
    </subcellularLocation>
    <text evidence="1">The transmembrane helix obliquely spans the membrane in one monomer, and its extrinsic C-terminal domain is part of the other monomer.</text>
</comment>
<comment type="miscellaneous">
    <text>This protein is 1 of 2 subunits of the cytochrome b6-f complex that are encoded in the nucleus.</text>
</comment>
<comment type="miscellaneous">
    <text>The Rieske iron-sulfur protein is a high potential 2Fe-2S protein.</text>
</comment>
<comment type="similarity">
    <text evidence="3">Belongs to the Rieske iron-sulfur protein family.</text>
</comment>
<protein>
    <recommendedName>
        <fullName>Cytochrome b6-f complex iron-sulfur subunit, chloroplastic</fullName>
        <ecNumber>7.1.1.6</ecNumber>
    </recommendedName>
    <alternativeName>
        <fullName>Plastohydroquinone:plastocyanin oxidoreductase iron-sulfur protein</fullName>
    </alternativeName>
    <alternativeName>
        <fullName>Rieske iron-sulfur protein</fullName>
        <shortName>ISP</shortName>
        <shortName>RISP</shortName>
    </alternativeName>
</protein>
<keyword id="KW-0001">2Fe-2S</keyword>
<keyword id="KW-0150">Chloroplast</keyword>
<keyword id="KW-1015">Disulfide bond</keyword>
<keyword id="KW-0249">Electron transport</keyword>
<keyword id="KW-0408">Iron</keyword>
<keyword id="KW-0411">Iron-sulfur</keyword>
<keyword id="KW-0472">Membrane</keyword>
<keyword id="KW-0479">Metal-binding</keyword>
<keyword id="KW-0934">Plastid</keyword>
<keyword id="KW-1185">Reference proteome</keyword>
<keyword id="KW-0793">Thylakoid</keyword>
<keyword id="KW-0809">Transit peptide</keyword>
<keyword id="KW-1278">Translocase</keyword>
<keyword id="KW-0812">Transmembrane</keyword>
<keyword id="KW-1133">Transmembrane helix</keyword>
<keyword id="KW-0813">Transport</keyword>
<gene>
    <name type="primary">petC</name>
</gene>
<evidence type="ECO:0000250" key="1"/>
<evidence type="ECO:0000255" key="2"/>
<evidence type="ECO:0000255" key="3">
    <source>
        <dbReference type="HAMAP-Rule" id="MF_01335"/>
    </source>
</evidence>